<organism>
    <name type="scientific">Coxiella burnetii (strain RSA 331 / Henzerling II)</name>
    <dbReference type="NCBI Taxonomy" id="360115"/>
    <lineage>
        <taxon>Bacteria</taxon>
        <taxon>Pseudomonadati</taxon>
        <taxon>Pseudomonadota</taxon>
        <taxon>Gammaproteobacteria</taxon>
        <taxon>Legionellales</taxon>
        <taxon>Coxiellaceae</taxon>
        <taxon>Coxiella</taxon>
    </lineage>
</organism>
<keyword id="KW-0067">ATP-binding</keyword>
<keyword id="KW-0436">Ligase</keyword>
<keyword id="KW-0547">Nucleotide-binding</keyword>
<keyword id="KW-0648">Protein biosynthesis</keyword>
<accession>A9N8Z5</accession>
<sequence length="477" mass="53424">MEWEPVIGLEVHVQLRTQSKIFSGAATAYGAEPNTQACAIDLGLPGVLPVLNKEAVKLAVCFGLSVNASIPPYSIFARKNYFYPDLPKGYQISQYNFPIVQNGHLDIENEDGTTKRIGITRAHLEEDAGKSFHEGMQGYSGIDFNRAGTPLLEIVSEPDIRSAQEAVAYLKALHSLVRYIGVSDANMQEGAFRCDVNISLRPKGEEKFGTRAEIKNVNSFRFVERAILFEINRQKEILENGGTIVQETRLYDAVQDETRSMRTKEEAHDYRYFPDPDLLPVEIGPEFIEAVKNQLPELPWEKRKRFAASYQLSNYDVKLLTTQIEIANYFETVLKIDKTIPPKLAANWINGDLAAALNKNNLSITQSPINAEQLAGLLHRIADNTLSGSMGKQVFETMWGGEGDADTIIERHGLKQITDTEALEKIIDEVIENNPTQVEQYRSGKDKLIAFFVGQVMKATKGKANPQQVNELFKKKL</sequence>
<reference key="1">
    <citation type="submission" date="2007-11" db="EMBL/GenBank/DDBJ databases">
        <title>Genome sequencing of phylogenetically and phenotypically diverse Coxiella burnetii isolates.</title>
        <authorList>
            <person name="Seshadri R."/>
            <person name="Samuel J.E."/>
        </authorList>
    </citation>
    <scope>NUCLEOTIDE SEQUENCE [LARGE SCALE GENOMIC DNA]</scope>
    <source>
        <strain>RSA 331 / Henzerling II</strain>
    </source>
</reference>
<comment type="function">
    <text evidence="1">Allows the formation of correctly charged Asn-tRNA(Asn) or Gln-tRNA(Gln) through the transamidation of misacylated Asp-tRNA(Asn) or Glu-tRNA(Gln) in organisms which lack either or both of asparaginyl-tRNA or glutaminyl-tRNA synthetases. The reaction takes place in the presence of glutamine and ATP through an activated phospho-Asp-tRNA(Asn) or phospho-Glu-tRNA(Gln).</text>
</comment>
<comment type="catalytic activity">
    <reaction evidence="1">
        <text>L-glutamyl-tRNA(Gln) + L-glutamine + ATP + H2O = L-glutaminyl-tRNA(Gln) + L-glutamate + ADP + phosphate + H(+)</text>
        <dbReference type="Rhea" id="RHEA:17521"/>
        <dbReference type="Rhea" id="RHEA-COMP:9681"/>
        <dbReference type="Rhea" id="RHEA-COMP:9684"/>
        <dbReference type="ChEBI" id="CHEBI:15377"/>
        <dbReference type="ChEBI" id="CHEBI:15378"/>
        <dbReference type="ChEBI" id="CHEBI:29985"/>
        <dbReference type="ChEBI" id="CHEBI:30616"/>
        <dbReference type="ChEBI" id="CHEBI:43474"/>
        <dbReference type="ChEBI" id="CHEBI:58359"/>
        <dbReference type="ChEBI" id="CHEBI:78520"/>
        <dbReference type="ChEBI" id="CHEBI:78521"/>
        <dbReference type="ChEBI" id="CHEBI:456216"/>
    </reaction>
</comment>
<comment type="catalytic activity">
    <reaction evidence="1">
        <text>L-aspartyl-tRNA(Asn) + L-glutamine + ATP + H2O = L-asparaginyl-tRNA(Asn) + L-glutamate + ADP + phosphate + 2 H(+)</text>
        <dbReference type="Rhea" id="RHEA:14513"/>
        <dbReference type="Rhea" id="RHEA-COMP:9674"/>
        <dbReference type="Rhea" id="RHEA-COMP:9677"/>
        <dbReference type="ChEBI" id="CHEBI:15377"/>
        <dbReference type="ChEBI" id="CHEBI:15378"/>
        <dbReference type="ChEBI" id="CHEBI:29985"/>
        <dbReference type="ChEBI" id="CHEBI:30616"/>
        <dbReference type="ChEBI" id="CHEBI:43474"/>
        <dbReference type="ChEBI" id="CHEBI:58359"/>
        <dbReference type="ChEBI" id="CHEBI:78515"/>
        <dbReference type="ChEBI" id="CHEBI:78516"/>
        <dbReference type="ChEBI" id="CHEBI:456216"/>
    </reaction>
</comment>
<comment type="subunit">
    <text evidence="1">Heterotrimer of A, B and C subunits.</text>
</comment>
<comment type="similarity">
    <text evidence="1">Belongs to the GatB/GatE family. GatB subfamily.</text>
</comment>
<proteinExistence type="inferred from homology"/>
<name>GATB_COXBR</name>
<protein>
    <recommendedName>
        <fullName evidence="1">Aspartyl/glutamyl-tRNA(Asn/Gln) amidotransferase subunit B</fullName>
        <shortName evidence="1">Asp/Glu-ADT subunit B</shortName>
        <ecNumber evidence="1">6.3.5.-</ecNumber>
    </recommendedName>
</protein>
<gene>
    <name evidence="1" type="primary">gatB</name>
    <name type="ordered locus">COXBURSA331_A1651</name>
</gene>
<dbReference type="EC" id="6.3.5.-" evidence="1"/>
<dbReference type="EMBL" id="CP000890">
    <property type="protein sequence ID" value="ABX78401.1"/>
    <property type="molecule type" value="Genomic_DNA"/>
</dbReference>
<dbReference type="RefSeq" id="WP_005772006.1">
    <property type="nucleotide sequence ID" value="NC_010117.1"/>
</dbReference>
<dbReference type="SMR" id="A9N8Z5"/>
<dbReference type="KEGG" id="cbs:COXBURSA331_A1651"/>
<dbReference type="HOGENOM" id="CLU_019240_0_0_6"/>
<dbReference type="GO" id="GO:0050566">
    <property type="term" value="F:asparaginyl-tRNA synthase (glutamine-hydrolyzing) activity"/>
    <property type="evidence" value="ECO:0007669"/>
    <property type="project" value="RHEA"/>
</dbReference>
<dbReference type="GO" id="GO:0005524">
    <property type="term" value="F:ATP binding"/>
    <property type="evidence" value="ECO:0007669"/>
    <property type="project" value="UniProtKB-KW"/>
</dbReference>
<dbReference type="GO" id="GO:0050567">
    <property type="term" value="F:glutaminyl-tRNA synthase (glutamine-hydrolyzing) activity"/>
    <property type="evidence" value="ECO:0007669"/>
    <property type="project" value="UniProtKB-UniRule"/>
</dbReference>
<dbReference type="GO" id="GO:0070681">
    <property type="term" value="P:glutaminyl-tRNAGln biosynthesis via transamidation"/>
    <property type="evidence" value="ECO:0007669"/>
    <property type="project" value="TreeGrafter"/>
</dbReference>
<dbReference type="GO" id="GO:0006412">
    <property type="term" value="P:translation"/>
    <property type="evidence" value="ECO:0007669"/>
    <property type="project" value="UniProtKB-UniRule"/>
</dbReference>
<dbReference type="FunFam" id="1.10.10.410:FF:000001">
    <property type="entry name" value="Aspartyl/glutamyl-tRNA(Asn/Gln) amidotransferase subunit B"/>
    <property type="match status" value="1"/>
</dbReference>
<dbReference type="FunFam" id="1.10.150.380:FF:000001">
    <property type="entry name" value="Aspartyl/glutamyl-tRNA(Asn/Gln) amidotransferase subunit B"/>
    <property type="match status" value="1"/>
</dbReference>
<dbReference type="Gene3D" id="1.10.10.410">
    <property type="match status" value="1"/>
</dbReference>
<dbReference type="Gene3D" id="1.10.150.380">
    <property type="entry name" value="GatB domain, N-terminal subdomain"/>
    <property type="match status" value="1"/>
</dbReference>
<dbReference type="HAMAP" id="MF_00121">
    <property type="entry name" value="GatB"/>
    <property type="match status" value="1"/>
</dbReference>
<dbReference type="InterPro" id="IPR017959">
    <property type="entry name" value="Asn/Gln-tRNA_amidoTrfase_suB/E"/>
</dbReference>
<dbReference type="InterPro" id="IPR006075">
    <property type="entry name" value="Asn/Gln-tRNA_Trfase_suB/E_cat"/>
</dbReference>
<dbReference type="InterPro" id="IPR018027">
    <property type="entry name" value="Asn/Gln_amidotransferase"/>
</dbReference>
<dbReference type="InterPro" id="IPR003789">
    <property type="entry name" value="Asn/Gln_tRNA_amidoTrase-B-like"/>
</dbReference>
<dbReference type="InterPro" id="IPR004413">
    <property type="entry name" value="GatB"/>
</dbReference>
<dbReference type="InterPro" id="IPR042114">
    <property type="entry name" value="GatB_C_1"/>
</dbReference>
<dbReference type="InterPro" id="IPR023168">
    <property type="entry name" value="GatB_Yqey_C_2"/>
</dbReference>
<dbReference type="InterPro" id="IPR017958">
    <property type="entry name" value="Gln-tRNA_amidoTrfase_suB_CS"/>
</dbReference>
<dbReference type="InterPro" id="IPR014746">
    <property type="entry name" value="Gln_synth/guanido_kin_cat_dom"/>
</dbReference>
<dbReference type="NCBIfam" id="TIGR00133">
    <property type="entry name" value="gatB"/>
    <property type="match status" value="1"/>
</dbReference>
<dbReference type="NCBIfam" id="NF004012">
    <property type="entry name" value="PRK05477.1-2"/>
    <property type="match status" value="1"/>
</dbReference>
<dbReference type="NCBIfam" id="NF004014">
    <property type="entry name" value="PRK05477.1-4"/>
    <property type="match status" value="1"/>
</dbReference>
<dbReference type="NCBIfam" id="NF004015">
    <property type="entry name" value="PRK05477.1-5"/>
    <property type="match status" value="1"/>
</dbReference>
<dbReference type="PANTHER" id="PTHR11659">
    <property type="entry name" value="GLUTAMYL-TRNA GLN AMIDOTRANSFERASE SUBUNIT B MITOCHONDRIAL AND PROKARYOTIC PET112-RELATED"/>
    <property type="match status" value="1"/>
</dbReference>
<dbReference type="PANTHER" id="PTHR11659:SF0">
    <property type="entry name" value="GLUTAMYL-TRNA(GLN) AMIDOTRANSFERASE SUBUNIT B, MITOCHONDRIAL"/>
    <property type="match status" value="1"/>
</dbReference>
<dbReference type="Pfam" id="PF02934">
    <property type="entry name" value="GatB_N"/>
    <property type="match status" value="1"/>
</dbReference>
<dbReference type="Pfam" id="PF02637">
    <property type="entry name" value="GatB_Yqey"/>
    <property type="match status" value="1"/>
</dbReference>
<dbReference type="SMART" id="SM00845">
    <property type="entry name" value="GatB_Yqey"/>
    <property type="match status" value="1"/>
</dbReference>
<dbReference type="SUPFAM" id="SSF89095">
    <property type="entry name" value="GatB/YqeY motif"/>
    <property type="match status" value="1"/>
</dbReference>
<dbReference type="SUPFAM" id="SSF55931">
    <property type="entry name" value="Glutamine synthetase/guanido kinase"/>
    <property type="match status" value="1"/>
</dbReference>
<dbReference type="PROSITE" id="PS01234">
    <property type="entry name" value="GATB"/>
    <property type="match status" value="1"/>
</dbReference>
<feature type="chain" id="PRO_1000076158" description="Aspartyl/glutamyl-tRNA(Asn/Gln) amidotransferase subunit B">
    <location>
        <begin position="1"/>
        <end position="477"/>
    </location>
</feature>
<evidence type="ECO:0000255" key="1">
    <source>
        <dbReference type="HAMAP-Rule" id="MF_00121"/>
    </source>
</evidence>